<protein>
    <recommendedName>
        <fullName evidence="1">Large ribosomal subunit protein uL1</fullName>
    </recommendedName>
    <alternativeName>
        <fullName evidence="2">50S ribosomal protein L1</fullName>
    </alternativeName>
</protein>
<proteinExistence type="inferred from homology"/>
<comment type="function">
    <text evidence="1">Binds directly to 23S rRNA. The L1 stalk is quite mobile in the ribosome, and is involved in E site tRNA release.</text>
</comment>
<comment type="function">
    <text evidence="1">Protein L1 is also a translational repressor protein, it controls the translation of the L11 operon by binding to its mRNA.</text>
</comment>
<comment type="subunit">
    <text evidence="1">Part of the 50S ribosomal subunit.</text>
</comment>
<comment type="similarity">
    <text evidence="1">Belongs to the universal ribosomal protein uL1 family.</text>
</comment>
<keyword id="KW-1185">Reference proteome</keyword>
<keyword id="KW-0678">Repressor</keyword>
<keyword id="KW-0687">Ribonucleoprotein</keyword>
<keyword id="KW-0689">Ribosomal protein</keyword>
<keyword id="KW-0694">RNA-binding</keyword>
<keyword id="KW-0699">rRNA-binding</keyword>
<keyword id="KW-0810">Translation regulation</keyword>
<keyword id="KW-0820">tRNA-binding</keyword>
<organism>
    <name type="scientific">Paraburkholderia phymatum (strain DSM 17167 / CIP 108236 / LMG 21445 / STM815)</name>
    <name type="common">Burkholderia phymatum</name>
    <dbReference type="NCBI Taxonomy" id="391038"/>
    <lineage>
        <taxon>Bacteria</taxon>
        <taxon>Pseudomonadati</taxon>
        <taxon>Pseudomonadota</taxon>
        <taxon>Betaproteobacteria</taxon>
        <taxon>Burkholderiales</taxon>
        <taxon>Burkholderiaceae</taxon>
        <taxon>Paraburkholderia</taxon>
    </lineage>
</organism>
<reference key="1">
    <citation type="journal article" date="2014" name="Stand. Genomic Sci.">
        <title>Complete genome sequence of Burkholderia phymatum STM815(T), a broad host range and efficient nitrogen-fixing symbiont of Mimosa species.</title>
        <authorList>
            <person name="Moulin L."/>
            <person name="Klonowska A."/>
            <person name="Caroline B."/>
            <person name="Booth K."/>
            <person name="Vriezen J.A."/>
            <person name="Melkonian R."/>
            <person name="James E.K."/>
            <person name="Young J.P."/>
            <person name="Bena G."/>
            <person name="Hauser L."/>
            <person name="Land M."/>
            <person name="Kyrpides N."/>
            <person name="Bruce D."/>
            <person name="Chain P."/>
            <person name="Copeland A."/>
            <person name="Pitluck S."/>
            <person name="Woyke T."/>
            <person name="Lizotte-Waniewski M."/>
            <person name="Bristow J."/>
            <person name="Riley M."/>
        </authorList>
    </citation>
    <scope>NUCLEOTIDE SEQUENCE [LARGE SCALE GENOMIC DNA]</scope>
    <source>
        <strain>DSM 17167 / CIP 108236 / LMG 21445 / STM815</strain>
    </source>
</reference>
<accession>B2JIH7</accession>
<gene>
    <name evidence="1" type="primary">rplA</name>
    <name type="ordered locus">Bphy_2851</name>
</gene>
<evidence type="ECO:0000255" key="1">
    <source>
        <dbReference type="HAMAP-Rule" id="MF_01318"/>
    </source>
</evidence>
<evidence type="ECO:0000305" key="2"/>
<sequence>MAKLSKRLQAFASKVDRQKLYAIEEALSLVKECASAKFDESIDVAVQLGIDAKKSDQVVRGSVVLPAGTGKSVRVAVFAQGEKAEQARAAGAEIVGMEDLAEQVKAGNLNFDVVIASPDTMRVVGTLGQILGPRGLMPNPKVGTVTPDVATAVKNAKAGQVQFRVDKAGIIHATIGRASFEPTALRSNLNALVEALQKAKPATSKGVYLRKIALSSTMGVGVRVDQATLAAQ</sequence>
<name>RL1_PARP8</name>
<feature type="chain" id="PRO_1000141374" description="Large ribosomal subunit protein uL1">
    <location>
        <begin position="1"/>
        <end position="232"/>
    </location>
</feature>
<dbReference type="EMBL" id="CP001043">
    <property type="protein sequence ID" value="ACC72023.1"/>
    <property type="molecule type" value="Genomic_DNA"/>
</dbReference>
<dbReference type="RefSeq" id="WP_012402204.1">
    <property type="nucleotide sequence ID" value="NC_010622.1"/>
</dbReference>
<dbReference type="SMR" id="B2JIH7"/>
<dbReference type="STRING" id="391038.Bphy_2851"/>
<dbReference type="KEGG" id="bph:Bphy_2851"/>
<dbReference type="eggNOG" id="COG0081">
    <property type="taxonomic scope" value="Bacteria"/>
</dbReference>
<dbReference type="HOGENOM" id="CLU_062853_0_0_4"/>
<dbReference type="OrthoDB" id="9803740at2"/>
<dbReference type="Proteomes" id="UP000001192">
    <property type="component" value="Chromosome 1"/>
</dbReference>
<dbReference type="GO" id="GO:0022625">
    <property type="term" value="C:cytosolic large ribosomal subunit"/>
    <property type="evidence" value="ECO:0007669"/>
    <property type="project" value="TreeGrafter"/>
</dbReference>
<dbReference type="GO" id="GO:0019843">
    <property type="term" value="F:rRNA binding"/>
    <property type="evidence" value="ECO:0007669"/>
    <property type="project" value="UniProtKB-UniRule"/>
</dbReference>
<dbReference type="GO" id="GO:0003735">
    <property type="term" value="F:structural constituent of ribosome"/>
    <property type="evidence" value="ECO:0007669"/>
    <property type="project" value="InterPro"/>
</dbReference>
<dbReference type="GO" id="GO:0000049">
    <property type="term" value="F:tRNA binding"/>
    <property type="evidence" value="ECO:0007669"/>
    <property type="project" value="UniProtKB-KW"/>
</dbReference>
<dbReference type="GO" id="GO:0006417">
    <property type="term" value="P:regulation of translation"/>
    <property type="evidence" value="ECO:0007669"/>
    <property type="project" value="UniProtKB-KW"/>
</dbReference>
<dbReference type="GO" id="GO:0006412">
    <property type="term" value="P:translation"/>
    <property type="evidence" value="ECO:0007669"/>
    <property type="project" value="UniProtKB-UniRule"/>
</dbReference>
<dbReference type="CDD" id="cd00403">
    <property type="entry name" value="Ribosomal_L1"/>
    <property type="match status" value="1"/>
</dbReference>
<dbReference type="FunFam" id="3.40.50.790:FF:000001">
    <property type="entry name" value="50S ribosomal protein L1"/>
    <property type="match status" value="1"/>
</dbReference>
<dbReference type="Gene3D" id="3.30.190.20">
    <property type="match status" value="1"/>
</dbReference>
<dbReference type="Gene3D" id="3.40.50.790">
    <property type="match status" value="1"/>
</dbReference>
<dbReference type="HAMAP" id="MF_01318_B">
    <property type="entry name" value="Ribosomal_uL1_B"/>
    <property type="match status" value="1"/>
</dbReference>
<dbReference type="InterPro" id="IPR005878">
    <property type="entry name" value="Ribosom_uL1_bac-type"/>
</dbReference>
<dbReference type="InterPro" id="IPR002143">
    <property type="entry name" value="Ribosomal_uL1"/>
</dbReference>
<dbReference type="InterPro" id="IPR023674">
    <property type="entry name" value="Ribosomal_uL1-like"/>
</dbReference>
<dbReference type="InterPro" id="IPR028364">
    <property type="entry name" value="Ribosomal_uL1/biogenesis"/>
</dbReference>
<dbReference type="InterPro" id="IPR016095">
    <property type="entry name" value="Ribosomal_uL1_3-a/b-sand"/>
</dbReference>
<dbReference type="InterPro" id="IPR023673">
    <property type="entry name" value="Ribosomal_uL1_CS"/>
</dbReference>
<dbReference type="NCBIfam" id="TIGR01169">
    <property type="entry name" value="rplA_bact"/>
    <property type="match status" value="1"/>
</dbReference>
<dbReference type="PANTHER" id="PTHR36427">
    <property type="entry name" value="54S RIBOSOMAL PROTEIN L1, MITOCHONDRIAL"/>
    <property type="match status" value="1"/>
</dbReference>
<dbReference type="PANTHER" id="PTHR36427:SF3">
    <property type="entry name" value="LARGE RIBOSOMAL SUBUNIT PROTEIN UL1M"/>
    <property type="match status" value="1"/>
</dbReference>
<dbReference type="Pfam" id="PF00687">
    <property type="entry name" value="Ribosomal_L1"/>
    <property type="match status" value="1"/>
</dbReference>
<dbReference type="PIRSF" id="PIRSF002155">
    <property type="entry name" value="Ribosomal_L1"/>
    <property type="match status" value="1"/>
</dbReference>
<dbReference type="SUPFAM" id="SSF56808">
    <property type="entry name" value="Ribosomal protein L1"/>
    <property type="match status" value="1"/>
</dbReference>
<dbReference type="PROSITE" id="PS01199">
    <property type="entry name" value="RIBOSOMAL_L1"/>
    <property type="match status" value="1"/>
</dbReference>